<name>RL10_ENTCL</name>
<evidence type="ECO:0000250" key="1"/>
<evidence type="ECO:0000305" key="2"/>
<gene>
    <name type="primary">rplJ</name>
</gene>
<dbReference type="EMBL" id="X74444">
    <property type="protein sequence ID" value="CAA52455.1"/>
    <property type="molecule type" value="Genomic_DNA"/>
</dbReference>
<dbReference type="eggNOG" id="COG0244">
    <property type="taxonomic scope" value="Bacteria"/>
</dbReference>
<dbReference type="GO" id="GO:1990904">
    <property type="term" value="C:ribonucleoprotein complex"/>
    <property type="evidence" value="ECO:0007669"/>
    <property type="project" value="UniProtKB-KW"/>
</dbReference>
<dbReference type="GO" id="GO:0005840">
    <property type="term" value="C:ribosome"/>
    <property type="evidence" value="ECO:0007669"/>
    <property type="project" value="UniProtKB-KW"/>
</dbReference>
<dbReference type="GO" id="GO:0019843">
    <property type="term" value="F:rRNA binding"/>
    <property type="evidence" value="ECO:0007669"/>
    <property type="project" value="UniProtKB-KW"/>
</dbReference>
<feature type="initiator methionine" description="Removed" evidence="1">
    <location>
        <position position="1"/>
    </location>
</feature>
<feature type="chain" id="PRO_0000154630" description="Large ribosomal subunit protein uL10">
    <location>
        <begin position="2"/>
        <end position="24" status="greater than"/>
    </location>
</feature>
<feature type="non-terminal residue">
    <location>
        <position position="24"/>
    </location>
</feature>
<sequence length="24" mass="2486">MALNLQDKQAIVAEVSEVAKGALS</sequence>
<keyword id="KW-0687">Ribonucleoprotein</keyword>
<keyword id="KW-0689">Ribosomal protein</keyword>
<keyword id="KW-0694">RNA-binding</keyword>
<keyword id="KW-0699">rRNA-binding</keyword>
<protein>
    <recommendedName>
        <fullName evidence="2">Large ribosomal subunit protein uL10</fullName>
    </recommendedName>
    <alternativeName>
        <fullName>50S ribosomal protein L10</fullName>
    </alternativeName>
</protein>
<accession>Q47608</accession>
<reference key="1">
    <citation type="submission" date="1993-08" db="EMBL/GenBank/DDBJ databases">
        <authorList>
            <person name="Zhyvoloup A."/>
        </authorList>
    </citation>
    <scope>NUCLEOTIDE SEQUENCE [GENOMIC DNA]</scope>
</reference>
<proteinExistence type="inferred from homology"/>
<comment type="function">
    <text evidence="1">Forms part of the ribosomal stalk, playing a central role in the interaction of the ribosome with GTP-bound translation factors.</text>
</comment>
<comment type="subunit">
    <text evidence="1">Part of the ribosomal stalk of the 50S ribosomal subunit. The N-terminus interacts with L11 and the large rRNA to form the base of the stalk. The C-terminus forms an elongated spine to which L12 dimers bind in a sequential fashion forming a multimeric L10(L12)X complex (By similarity).</text>
</comment>
<comment type="similarity">
    <text evidence="2">Belongs to the universal ribosomal protein uL10 family.</text>
</comment>
<organism>
    <name type="scientific">Enterobacter cloacae</name>
    <dbReference type="NCBI Taxonomy" id="550"/>
    <lineage>
        <taxon>Bacteria</taxon>
        <taxon>Pseudomonadati</taxon>
        <taxon>Pseudomonadota</taxon>
        <taxon>Gammaproteobacteria</taxon>
        <taxon>Enterobacterales</taxon>
        <taxon>Enterobacteriaceae</taxon>
        <taxon>Enterobacter</taxon>
        <taxon>Enterobacter cloacae complex</taxon>
    </lineage>
</organism>